<evidence type="ECO:0000255" key="1">
    <source>
        <dbReference type="HAMAP-Rule" id="MF_01910"/>
    </source>
</evidence>
<reference key="1">
    <citation type="journal article" date="1999" name="DNA Res.">
        <title>Complete genome sequence of an aerobic hyper-thermophilic crenarchaeon, Aeropyrum pernix K1.</title>
        <authorList>
            <person name="Kawarabayasi Y."/>
            <person name="Hino Y."/>
            <person name="Horikawa H."/>
            <person name="Yamazaki S."/>
            <person name="Haikawa Y."/>
            <person name="Jin-no K."/>
            <person name="Takahashi M."/>
            <person name="Sekine M."/>
            <person name="Baba S."/>
            <person name="Ankai A."/>
            <person name="Kosugi H."/>
            <person name="Hosoyama A."/>
            <person name="Fukui S."/>
            <person name="Nagai Y."/>
            <person name="Nishijima K."/>
            <person name="Nakazawa H."/>
            <person name="Takamiya M."/>
            <person name="Masuda S."/>
            <person name="Funahashi T."/>
            <person name="Tanaka T."/>
            <person name="Kudoh Y."/>
            <person name="Yamazaki J."/>
            <person name="Kushida N."/>
            <person name="Oguchi A."/>
            <person name="Aoki K."/>
            <person name="Kubota K."/>
            <person name="Nakamura Y."/>
            <person name="Nomura N."/>
            <person name="Sako Y."/>
            <person name="Kikuchi H."/>
        </authorList>
    </citation>
    <scope>NUCLEOTIDE SEQUENCE [LARGE SCALE GENOMIC DNA]</scope>
    <source>
        <strain>ATCC 700893 / DSM 11879 / JCM 9820 / NBRC 100138 / K1</strain>
    </source>
</reference>
<feature type="chain" id="PRO_0000334192" description="Probable ribonuclease FAU-1">
    <location>
        <begin position="1"/>
        <end position="471"/>
    </location>
</feature>
<sequence length="471" mass="51386">MLYAVRVRGIYATALVALALKKGYLLSDLSKTMLSRVEVPVSTRPPNITVKHGEESRDEIVIHAFPYEAGERFEADLLEEVGHAAVRRSLLGLRSVVDARAAEGCRAEGPGGVLIIVKGGECPQPGSMVRVTVVRSPPGSDVVEGRVGVELTGLTVRVMHPGSGVRISRHLTSEDAAKALKAVEASGIDLNQFSVHIRSGARLASEGDISDEIRRLAREAERLWREGPGGEPAVLSRGEYLSLVYLPSTAKHVMDGLRTSLYPTVNNHHSLKSWSSEAEGLLTDFAEEGVREGLWGGEAGDLIVRFISSRLVGRTAVVLHRRPDGETIRLGPFRVSSYRPSSGRGGEIVLERTFRSPGVYDGLGLERRPGDRGVTHVYMGDWLTIHEYYDKSGRLLGVYANINTPPEVGFQGLKYLDLLVDVVKRPGEEPETIDQGELEKACRSGLLTDRLCEEAARQAERASGLLQSRYP</sequence>
<organism>
    <name type="scientific">Aeropyrum pernix (strain ATCC 700893 / DSM 11879 / JCM 9820 / NBRC 100138 / K1)</name>
    <dbReference type="NCBI Taxonomy" id="272557"/>
    <lineage>
        <taxon>Archaea</taxon>
        <taxon>Thermoproteota</taxon>
        <taxon>Thermoprotei</taxon>
        <taxon>Desulfurococcales</taxon>
        <taxon>Desulfurococcaceae</taxon>
        <taxon>Aeropyrum</taxon>
    </lineage>
</organism>
<gene>
    <name evidence="1" type="primary">fau-1</name>
    <name type="ordered locus">APE_2336.1</name>
</gene>
<keyword id="KW-0255">Endonuclease</keyword>
<keyword id="KW-0378">Hydrolase</keyword>
<keyword id="KW-0540">Nuclease</keyword>
<keyword id="KW-1185">Reference proteome</keyword>
<keyword id="KW-0694">RNA-binding</keyword>
<keyword id="KW-0698">rRNA processing</keyword>
<name>FAU1_AERPE</name>
<dbReference type="EC" id="3.1.26.-" evidence="1"/>
<dbReference type="EMBL" id="BA000002">
    <property type="protein sequence ID" value="BAA81348.2"/>
    <property type="molecule type" value="Genomic_DNA"/>
</dbReference>
<dbReference type="PIR" id="D72461">
    <property type="entry name" value="D72461"/>
</dbReference>
<dbReference type="RefSeq" id="WP_010866948.1">
    <property type="nucleotide sequence ID" value="NC_000854.2"/>
</dbReference>
<dbReference type="SMR" id="Q9Y9F2"/>
<dbReference type="STRING" id="272557.APE_2336.1"/>
<dbReference type="EnsemblBacteria" id="BAA81348">
    <property type="protein sequence ID" value="BAA81348"/>
    <property type="gene ID" value="APE_2336.1"/>
</dbReference>
<dbReference type="GeneID" id="1445358"/>
<dbReference type="KEGG" id="ape:APE_2336.1"/>
<dbReference type="eggNOG" id="arCOG04307">
    <property type="taxonomic scope" value="Archaea"/>
</dbReference>
<dbReference type="Proteomes" id="UP000002518">
    <property type="component" value="Chromosome"/>
</dbReference>
<dbReference type="GO" id="GO:0035925">
    <property type="term" value="F:mRNA 3'-UTR AU-rich region binding"/>
    <property type="evidence" value="ECO:0007669"/>
    <property type="project" value="UniProtKB-UniRule"/>
</dbReference>
<dbReference type="GO" id="GO:0016891">
    <property type="term" value="F:RNA endonuclease activity, producing 5'-phosphomonoesters"/>
    <property type="evidence" value="ECO:0007669"/>
    <property type="project" value="UniProtKB-UniRule"/>
</dbReference>
<dbReference type="GO" id="GO:0006364">
    <property type="term" value="P:rRNA processing"/>
    <property type="evidence" value="ECO:0007669"/>
    <property type="project" value="UniProtKB-UniRule"/>
</dbReference>
<dbReference type="Gene3D" id="2.40.380.10">
    <property type="entry name" value="FomD-like"/>
    <property type="match status" value="1"/>
</dbReference>
<dbReference type="HAMAP" id="MF_01910">
    <property type="entry name" value="RNA_binding_AU_1"/>
    <property type="match status" value="1"/>
</dbReference>
<dbReference type="InterPro" id="IPR007295">
    <property type="entry name" value="DUF402"/>
</dbReference>
<dbReference type="InterPro" id="IPR035930">
    <property type="entry name" value="FomD-like_sf"/>
</dbReference>
<dbReference type="InterPro" id="IPR050212">
    <property type="entry name" value="Ntdp-like"/>
</dbReference>
<dbReference type="InterPro" id="IPR016730">
    <property type="entry name" value="RNA-bd_FAU-1"/>
</dbReference>
<dbReference type="PANTHER" id="PTHR39159">
    <property type="match status" value="1"/>
</dbReference>
<dbReference type="PANTHER" id="PTHR39159:SF1">
    <property type="entry name" value="UPF0374 PROTEIN YGAC"/>
    <property type="match status" value="1"/>
</dbReference>
<dbReference type="Pfam" id="PF04167">
    <property type="entry name" value="DUF402"/>
    <property type="match status" value="1"/>
</dbReference>
<dbReference type="PIRSF" id="PIRSF018644">
    <property type="entry name" value="RNA-binding_FAU-1"/>
    <property type="match status" value="1"/>
</dbReference>
<dbReference type="SUPFAM" id="SSF159234">
    <property type="entry name" value="FomD-like"/>
    <property type="match status" value="1"/>
</dbReference>
<comment type="function">
    <text evidence="1">Probable RNase involved in rRNA stability through maturation and/or degradation of precursor rRNAs. Binds to RNA in loop regions with AU-rich sequences.</text>
</comment>
<comment type="similarity">
    <text evidence="1">Belongs to the FAU-1 family.</text>
</comment>
<proteinExistence type="inferred from homology"/>
<protein>
    <recommendedName>
        <fullName evidence="1">Probable ribonuclease FAU-1</fullName>
        <ecNumber evidence="1">3.1.26.-</ecNumber>
    </recommendedName>
    <alternativeName>
        <fullName evidence="1">RNA-binding protein FAU-1</fullName>
    </alternativeName>
</protein>
<accession>Q9Y9F2</accession>